<gene>
    <name evidence="6" type="primary">PPG1</name>
    <name type="ordered locus">CAALFM_C405050CA</name>
    <name type="ORF">CaO19.11256</name>
    <name type="ORF">CaO19.3774</name>
</gene>
<comment type="function">
    <text evidence="5">Serine/threonine-protein phosphatase that plays an important role in controlling colony morphology, filament extension and agar invasion. Down-regulates expression of NRG1 and affects the expression of multiple filament-specific transcripts in response to serum and 37 degrees Celsius. Plays a crucial role in virulence in a mouse model of systemic candidiasis.</text>
</comment>
<comment type="catalytic activity">
    <reaction evidence="5">
        <text>O-phospho-L-seryl-[protein] + H2O = L-seryl-[protein] + phosphate</text>
        <dbReference type="Rhea" id="RHEA:20629"/>
        <dbReference type="Rhea" id="RHEA-COMP:9863"/>
        <dbReference type="Rhea" id="RHEA-COMP:11604"/>
        <dbReference type="ChEBI" id="CHEBI:15377"/>
        <dbReference type="ChEBI" id="CHEBI:29999"/>
        <dbReference type="ChEBI" id="CHEBI:43474"/>
        <dbReference type="ChEBI" id="CHEBI:83421"/>
        <dbReference type="EC" id="3.1.3.16"/>
    </reaction>
</comment>
<comment type="catalytic activity">
    <reaction evidence="5">
        <text>O-phospho-L-threonyl-[protein] + H2O = L-threonyl-[protein] + phosphate</text>
        <dbReference type="Rhea" id="RHEA:47004"/>
        <dbReference type="Rhea" id="RHEA-COMP:11060"/>
        <dbReference type="Rhea" id="RHEA-COMP:11605"/>
        <dbReference type="ChEBI" id="CHEBI:15377"/>
        <dbReference type="ChEBI" id="CHEBI:30013"/>
        <dbReference type="ChEBI" id="CHEBI:43474"/>
        <dbReference type="ChEBI" id="CHEBI:61977"/>
        <dbReference type="EC" id="3.1.3.16"/>
    </reaction>
</comment>
<comment type="cofactor">
    <cofactor evidence="2">
        <name>Mn(2+)</name>
        <dbReference type="ChEBI" id="CHEBI:29035"/>
    </cofactor>
    <text evidence="2">Binds 2 manganese ions per subunit.</text>
</comment>
<comment type="activity regulation">
    <text evidence="5">Inhibited by okadaic acid, a specific inhibitor of serine/threonine phosphatases of types 1, 2A and 2B.</text>
</comment>
<comment type="disruption phenotype">
    <text evidence="4">Leads to defect in morphogenesis and reduced virulence.</text>
</comment>
<comment type="similarity">
    <text evidence="7">Belongs to the PPP phosphatase family. PP-2A subfamily.</text>
</comment>
<accession>Q5A6B6</accession>
<accession>A0A1D8PM78</accession>
<accession>Q5A6J5</accession>
<name>PPG1_CANAL</name>
<keyword id="KW-0378">Hydrolase</keyword>
<keyword id="KW-0464">Manganese</keyword>
<keyword id="KW-0479">Metal-binding</keyword>
<keyword id="KW-1185">Reference proteome</keyword>
<sequence length="416" mass="47040">MTVPFKIPISDLDYCLEQLLDHKPPKILPPETIQQLCHTLKTELLQTPNIISLQSPISVVGDIHGQYHDLLEIFQIGGSPPQTNYLFLGDYVDRGYYSVETISLLLVLKLRYPERVFLIRGNHESRTITTNYGFYTEVLNKYQGSADVWTFITDLFDYLPLGATIDGKIFACHGGLSPSCQQLDQIRAVDRFREIPHDGIMADLVWSDPDVAISDFKLSPRGAGYLFGNDVIDKFCQDNNLVQMIRAHQLCNEGYTSYWKGKCLTVWSAPNYCYRCGNKASVLEILHSNYDSKDPTNGSDGEISSINGEFIGVNTSFESFGDDDDDYNDYRNRFNNSSRLHKQQGVLPGQFFNVFEASKENDEDTLQGKSVNGINFDDELSTSDDTSGSGGNNNKGDFFAAFFQERPKRQQVEYFL</sequence>
<protein>
    <recommendedName>
        <fullName evidence="6">Serine/threonine-protein phosphatase PP2A-like PPG1</fullName>
        <ecNumber evidence="5">3.1.3.16</ecNumber>
    </recommendedName>
</protein>
<evidence type="ECO:0000250" key="1">
    <source>
        <dbReference type="UniProtKB" id="P36873"/>
    </source>
</evidence>
<evidence type="ECO:0000250" key="2">
    <source>
        <dbReference type="UniProtKB" id="P67775"/>
    </source>
</evidence>
<evidence type="ECO:0000256" key="3">
    <source>
        <dbReference type="SAM" id="MobiDB-lite"/>
    </source>
</evidence>
<evidence type="ECO:0000269" key="4">
    <source>
    </source>
</evidence>
<evidence type="ECO:0000269" key="5">
    <source>
    </source>
</evidence>
<evidence type="ECO:0000303" key="6">
    <source>
    </source>
</evidence>
<evidence type="ECO:0000305" key="7"/>
<proteinExistence type="evidence at protein level"/>
<dbReference type="EC" id="3.1.3.16" evidence="5"/>
<dbReference type="EMBL" id="CP017626">
    <property type="protein sequence ID" value="AOW29246.1"/>
    <property type="molecule type" value="Genomic_DNA"/>
</dbReference>
<dbReference type="RefSeq" id="XP_717179.1">
    <property type="nucleotide sequence ID" value="XM_712086.2"/>
</dbReference>
<dbReference type="SMR" id="Q5A6B6"/>
<dbReference type="FunCoup" id="Q5A6B6">
    <property type="interactions" value="45"/>
</dbReference>
<dbReference type="STRING" id="237561.Q5A6B6"/>
<dbReference type="EnsemblFungi" id="C4_05050C_A-T">
    <property type="protein sequence ID" value="C4_05050C_A-T-p1"/>
    <property type="gene ID" value="C4_05050C_A"/>
</dbReference>
<dbReference type="GeneID" id="3641143"/>
<dbReference type="KEGG" id="cal:CAALFM_C405050CA"/>
<dbReference type="CGD" id="CAL0000190355">
    <property type="gene designation" value="PPG1"/>
</dbReference>
<dbReference type="VEuPathDB" id="FungiDB:C4_05050C_A"/>
<dbReference type="eggNOG" id="KOG0372">
    <property type="taxonomic scope" value="Eukaryota"/>
</dbReference>
<dbReference type="HOGENOM" id="CLU_004962_0_2_1"/>
<dbReference type="InParanoid" id="Q5A6B6"/>
<dbReference type="OrthoDB" id="1930084at2759"/>
<dbReference type="PHI-base" id="PHI:4878"/>
<dbReference type="PRO" id="PR:Q5A6B6"/>
<dbReference type="Proteomes" id="UP000000559">
    <property type="component" value="Chromosome 4"/>
</dbReference>
<dbReference type="GO" id="GO:0090443">
    <property type="term" value="C:FAR/SIN/STRIPAK complex"/>
    <property type="evidence" value="ECO:0000318"/>
    <property type="project" value="GO_Central"/>
</dbReference>
<dbReference type="GO" id="GO:0005741">
    <property type="term" value="C:mitochondrial outer membrane"/>
    <property type="evidence" value="ECO:0007669"/>
    <property type="project" value="EnsemblFungi"/>
</dbReference>
<dbReference type="GO" id="GO:0004553">
    <property type="term" value="F:hydrolase activity, hydrolyzing O-glycosyl compounds"/>
    <property type="evidence" value="ECO:0007669"/>
    <property type="project" value="InterPro"/>
</dbReference>
<dbReference type="GO" id="GO:0046872">
    <property type="term" value="F:metal ion binding"/>
    <property type="evidence" value="ECO:0007669"/>
    <property type="project" value="UniProtKB-KW"/>
</dbReference>
<dbReference type="GO" id="GO:0004722">
    <property type="term" value="F:protein serine/threonine phosphatase activity"/>
    <property type="evidence" value="ECO:0000314"/>
    <property type="project" value="CGD"/>
</dbReference>
<dbReference type="GO" id="GO:0061509">
    <property type="term" value="P:asymmetric protein localization to old mitotic spindle pole body"/>
    <property type="evidence" value="ECO:0000318"/>
    <property type="project" value="GO_Central"/>
</dbReference>
<dbReference type="GO" id="GO:0044182">
    <property type="term" value="P:filamentous growth of a population of unicellular organisms"/>
    <property type="evidence" value="ECO:0000315"/>
    <property type="project" value="CGD"/>
</dbReference>
<dbReference type="GO" id="GO:0005977">
    <property type="term" value="P:glycogen metabolic process"/>
    <property type="evidence" value="ECO:0007669"/>
    <property type="project" value="EnsemblFungi"/>
</dbReference>
<dbReference type="GO" id="GO:1901525">
    <property type="term" value="P:negative regulation of mitophagy"/>
    <property type="evidence" value="ECO:0007669"/>
    <property type="project" value="EnsemblFungi"/>
</dbReference>
<dbReference type="CDD" id="cd07415">
    <property type="entry name" value="MPP_PP2A_PP4_PP6"/>
    <property type="match status" value="1"/>
</dbReference>
<dbReference type="FunFam" id="3.60.21.10:FF:000168">
    <property type="entry name" value="Serine/threonine-protein phosphatase"/>
    <property type="match status" value="1"/>
</dbReference>
<dbReference type="Gene3D" id="3.60.21.10">
    <property type="match status" value="1"/>
</dbReference>
<dbReference type="InterPro" id="IPR004843">
    <property type="entry name" value="Calcineurin-like_PHP_ApaH"/>
</dbReference>
<dbReference type="InterPro" id="IPR001579">
    <property type="entry name" value="Glyco_hydro_18_chit_AS"/>
</dbReference>
<dbReference type="InterPro" id="IPR029052">
    <property type="entry name" value="Metallo-depent_PP-like"/>
</dbReference>
<dbReference type="InterPro" id="IPR047129">
    <property type="entry name" value="PPA2-like"/>
</dbReference>
<dbReference type="InterPro" id="IPR006186">
    <property type="entry name" value="Ser/Thr-sp_prot-phosphatase"/>
</dbReference>
<dbReference type="PANTHER" id="PTHR45619">
    <property type="entry name" value="SERINE/THREONINE-PROTEIN PHOSPHATASE PP2A-RELATED"/>
    <property type="match status" value="1"/>
</dbReference>
<dbReference type="Pfam" id="PF00149">
    <property type="entry name" value="Metallophos"/>
    <property type="match status" value="1"/>
</dbReference>
<dbReference type="PRINTS" id="PR00114">
    <property type="entry name" value="STPHPHTASE"/>
</dbReference>
<dbReference type="SMART" id="SM00156">
    <property type="entry name" value="PP2Ac"/>
    <property type="match status" value="1"/>
</dbReference>
<dbReference type="SUPFAM" id="SSF56300">
    <property type="entry name" value="Metallo-dependent phosphatases"/>
    <property type="match status" value="1"/>
</dbReference>
<dbReference type="PROSITE" id="PS01095">
    <property type="entry name" value="GH18_1"/>
    <property type="match status" value="1"/>
</dbReference>
<dbReference type="PROSITE" id="PS00125">
    <property type="entry name" value="SER_THR_PHOSPHATASE"/>
    <property type="match status" value="1"/>
</dbReference>
<feature type="chain" id="PRO_0000431445" description="Serine/threonine-protein phosphatase PP2A-like PPG1">
    <location>
        <begin position="1"/>
        <end position="416"/>
    </location>
</feature>
<feature type="region of interest" description="Disordered" evidence="3">
    <location>
        <begin position="363"/>
        <end position="391"/>
    </location>
</feature>
<feature type="active site" description="Proton donor" evidence="1">
    <location>
        <position position="123"/>
    </location>
</feature>
<feature type="binding site" evidence="2">
    <location>
        <position position="62"/>
    </location>
    <ligand>
        <name>Mn(2+)</name>
        <dbReference type="ChEBI" id="CHEBI:29035"/>
        <label>1</label>
    </ligand>
</feature>
<feature type="binding site" evidence="2">
    <location>
        <position position="64"/>
    </location>
    <ligand>
        <name>Mn(2+)</name>
        <dbReference type="ChEBI" id="CHEBI:29035"/>
        <label>1</label>
    </ligand>
</feature>
<feature type="binding site" evidence="2">
    <location>
        <position position="90"/>
    </location>
    <ligand>
        <name>Mn(2+)</name>
        <dbReference type="ChEBI" id="CHEBI:29035"/>
        <label>1</label>
    </ligand>
</feature>
<feature type="binding site" evidence="2">
    <location>
        <position position="90"/>
    </location>
    <ligand>
        <name>Mn(2+)</name>
        <dbReference type="ChEBI" id="CHEBI:29035"/>
        <label>2</label>
    </ligand>
</feature>
<feature type="binding site" evidence="2">
    <location>
        <position position="122"/>
    </location>
    <ligand>
        <name>Mn(2+)</name>
        <dbReference type="ChEBI" id="CHEBI:29035"/>
        <label>2</label>
    </ligand>
</feature>
<feature type="binding site" evidence="2">
    <location>
        <position position="173"/>
    </location>
    <ligand>
        <name>Mn(2+)</name>
        <dbReference type="ChEBI" id="CHEBI:29035"/>
        <label>2</label>
    </ligand>
</feature>
<feature type="binding site" evidence="2">
    <location>
        <position position="248"/>
    </location>
    <ligand>
        <name>Mn(2+)</name>
        <dbReference type="ChEBI" id="CHEBI:29035"/>
        <label>2</label>
    </ligand>
</feature>
<feature type="sequence variant" description="In allele: CaO19.11256.">
    <original>S</original>
    <variation>STKHGKVDDSS</variation>
    <location>
        <position position="305"/>
    </location>
</feature>
<feature type="mutagenesis site" description="Abolishes catalytic activity; when associated with A-173 and A-248." evidence="5">
    <original>D</original>
    <variation>L</variation>
    <location>
        <position position="90"/>
    </location>
</feature>
<feature type="mutagenesis site" description="Abolishes catalytic activity; when associated with L-90 and A-248." evidence="5">
    <original>H</original>
    <variation>A</variation>
    <location>
        <position position="173"/>
    </location>
</feature>
<feature type="mutagenesis site" description="Abolishes catalytic activity; when associated with L-90 and A-173." evidence="5">
    <original>H</original>
    <variation>A</variation>
    <location>
        <position position="248"/>
    </location>
</feature>
<reference key="1">
    <citation type="journal article" date="2004" name="Proc. Natl. Acad. Sci. U.S.A.">
        <title>The diploid genome sequence of Candida albicans.</title>
        <authorList>
            <person name="Jones T."/>
            <person name="Federspiel N.A."/>
            <person name="Chibana H."/>
            <person name="Dungan J."/>
            <person name="Kalman S."/>
            <person name="Magee B.B."/>
            <person name="Newport G."/>
            <person name="Thorstenson Y.R."/>
            <person name="Agabian N."/>
            <person name="Magee P.T."/>
            <person name="Davis R.W."/>
            <person name="Scherer S."/>
        </authorList>
    </citation>
    <scope>NUCLEOTIDE SEQUENCE [LARGE SCALE GENOMIC DNA]</scope>
    <source>
        <strain>SC5314 / ATCC MYA-2876</strain>
    </source>
</reference>
<reference key="2">
    <citation type="journal article" date="2007" name="Genome Biol.">
        <title>Assembly of the Candida albicans genome into sixteen supercontigs aligned on the eight chromosomes.</title>
        <authorList>
            <person name="van het Hoog M."/>
            <person name="Rast T.J."/>
            <person name="Martchenko M."/>
            <person name="Grindle S."/>
            <person name="Dignard D."/>
            <person name="Hogues H."/>
            <person name="Cuomo C."/>
            <person name="Berriman M."/>
            <person name="Scherer S."/>
            <person name="Magee B.B."/>
            <person name="Whiteway M."/>
            <person name="Chibana H."/>
            <person name="Nantel A."/>
            <person name="Magee P.T."/>
        </authorList>
    </citation>
    <scope>GENOME REANNOTATION</scope>
    <source>
        <strain>SC5314 / ATCC MYA-2876</strain>
    </source>
</reference>
<reference key="3">
    <citation type="journal article" date="2013" name="Genome Biol.">
        <title>Assembly of a phased diploid Candida albicans genome facilitates allele-specific measurements and provides a simple model for repeat and indel structure.</title>
        <authorList>
            <person name="Muzzey D."/>
            <person name="Schwartz K."/>
            <person name="Weissman J.S."/>
            <person name="Sherlock G."/>
        </authorList>
    </citation>
    <scope>NUCLEOTIDE SEQUENCE [LARGE SCALE GENOMIC DNA]</scope>
    <scope>GENOME REANNOTATION</scope>
    <source>
        <strain>SC5314 / ATCC MYA-2876</strain>
    </source>
</reference>
<reference key="4">
    <citation type="journal article" date="2008" name="Eukaryot. Cell">
        <title>Identification of the putative protein phosphatase gene PTC1 as a virulence-related gene using a silkworm model of Candida albicans infection.</title>
        <authorList>
            <person name="Hanaoka N."/>
            <person name="Takano Y."/>
            <person name="Shibuya K."/>
            <person name="Fugo H."/>
            <person name="Uehara Y."/>
            <person name="Niimi M."/>
        </authorList>
    </citation>
    <scope>IDENTIFICATION</scope>
</reference>
<reference key="5">
    <citation type="journal article" date="2010" name="Nat. Genet.">
        <title>Systematic screens of a Candida albicans homozygous deletion library decouple morphogenetic switching and pathogenicity.</title>
        <authorList>
            <person name="Noble S.M."/>
            <person name="French S."/>
            <person name="Kohn L.A."/>
            <person name="Chen V."/>
            <person name="Johnson A.D."/>
        </authorList>
    </citation>
    <scope>DISRUPTION PHENOTYPE</scope>
</reference>
<reference key="6">
    <citation type="journal article" date="2014" name="Eukaryot. Cell">
        <title>Ppg1, a PP2A-type protein phosphatase, controls filament extension and virulence in Candida albicans.</title>
        <authorList>
            <person name="Albataineh M.T."/>
            <person name="Lazzell A."/>
            <person name="Lopez-Ribot J.L."/>
            <person name="Kadosh D."/>
        </authorList>
    </citation>
    <scope>FUNCTION</scope>
    <scope>CATALYTIC ACTIVITY</scope>
    <scope>MUTAGENESIS OF ASP-90; HIS-173 AND HIS-248</scope>
    <scope>ACTIVITY REGULATION</scope>
</reference>
<organism>
    <name type="scientific">Candida albicans (strain SC5314 / ATCC MYA-2876)</name>
    <name type="common">Yeast</name>
    <dbReference type="NCBI Taxonomy" id="237561"/>
    <lineage>
        <taxon>Eukaryota</taxon>
        <taxon>Fungi</taxon>
        <taxon>Dikarya</taxon>
        <taxon>Ascomycota</taxon>
        <taxon>Saccharomycotina</taxon>
        <taxon>Pichiomycetes</taxon>
        <taxon>Debaryomycetaceae</taxon>
        <taxon>Candida/Lodderomyces clade</taxon>
        <taxon>Candida</taxon>
    </lineage>
</organism>